<keyword id="KW-0903">Direct protein sequencing</keyword>
<keyword id="KW-1185">Reference proteome</keyword>
<keyword id="KW-0749">Sporulation</keyword>
<organism>
    <name type="scientific">Bacillus subtilis (strain 168)</name>
    <dbReference type="NCBI Taxonomy" id="224308"/>
    <lineage>
        <taxon>Bacteria</taxon>
        <taxon>Bacillati</taxon>
        <taxon>Bacillota</taxon>
        <taxon>Bacilli</taxon>
        <taxon>Bacillales</taxon>
        <taxon>Bacillaceae</taxon>
        <taxon>Bacillus</taxon>
    </lineage>
</organism>
<reference key="1">
    <citation type="journal article" date="1997" name="Nature">
        <title>The complete genome sequence of the Gram-positive bacterium Bacillus subtilis.</title>
        <authorList>
            <person name="Kunst F."/>
            <person name="Ogasawara N."/>
            <person name="Moszer I."/>
            <person name="Albertini A.M."/>
            <person name="Alloni G."/>
            <person name="Azevedo V."/>
            <person name="Bertero M.G."/>
            <person name="Bessieres P."/>
            <person name="Bolotin A."/>
            <person name="Borchert S."/>
            <person name="Borriss R."/>
            <person name="Boursier L."/>
            <person name="Brans A."/>
            <person name="Braun M."/>
            <person name="Brignell S.C."/>
            <person name="Bron S."/>
            <person name="Brouillet S."/>
            <person name="Bruschi C.V."/>
            <person name="Caldwell B."/>
            <person name="Capuano V."/>
            <person name="Carter N.M."/>
            <person name="Choi S.-K."/>
            <person name="Codani J.-J."/>
            <person name="Connerton I.F."/>
            <person name="Cummings N.J."/>
            <person name="Daniel R.A."/>
            <person name="Denizot F."/>
            <person name="Devine K.M."/>
            <person name="Duesterhoeft A."/>
            <person name="Ehrlich S.D."/>
            <person name="Emmerson P.T."/>
            <person name="Entian K.-D."/>
            <person name="Errington J."/>
            <person name="Fabret C."/>
            <person name="Ferrari E."/>
            <person name="Foulger D."/>
            <person name="Fritz C."/>
            <person name="Fujita M."/>
            <person name="Fujita Y."/>
            <person name="Fuma S."/>
            <person name="Galizzi A."/>
            <person name="Galleron N."/>
            <person name="Ghim S.-Y."/>
            <person name="Glaser P."/>
            <person name="Goffeau A."/>
            <person name="Golightly E.J."/>
            <person name="Grandi G."/>
            <person name="Guiseppi G."/>
            <person name="Guy B.J."/>
            <person name="Haga K."/>
            <person name="Haiech J."/>
            <person name="Harwood C.R."/>
            <person name="Henaut A."/>
            <person name="Hilbert H."/>
            <person name="Holsappel S."/>
            <person name="Hosono S."/>
            <person name="Hullo M.-F."/>
            <person name="Itaya M."/>
            <person name="Jones L.-M."/>
            <person name="Joris B."/>
            <person name="Karamata D."/>
            <person name="Kasahara Y."/>
            <person name="Klaerr-Blanchard M."/>
            <person name="Klein C."/>
            <person name="Kobayashi Y."/>
            <person name="Koetter P."/>
            <person name="Koningstein G."/>
            <person name="Krogh S."/>
            <person name="Kumano M."/>
            <person name="Kurita K."/>
            <person name="Lapidus A."/>
            <person name="Lardinois S."/>
            <person name="Lauber J."/>
            <person name="Lazarevic V."/>
            <person name="Lee S.-M."/>
            <person name="Levine A."/>
            <person name="Liu H."/>
            <person name="Masuda S."/>
            <person name="Mauel C."/>
            <person name="Medigue C."/>
            <person name="Medina N."/>
            <person name="Mellado R.P."/>
            <person name="Mizuno M."/>
            <person name="Moestl D."/>
            <person name="Nakai S."/>
            <person name="Noback M."/>
            <person name="Noone D."/>
            <person name="O'Reilly M."/>
            <person name="Ogawa K."/>
            <person name="Ogiwara A."/>
            <person name="Oudega B."/>
            <person name="Park S.-H."/>
            <person name="Parro V."/>
            <person name="Pohl T.M."/>
            <person name="Portetelle D."/>
            <person name="Porwollik S."/>
            <person name="Prescott A.M."/>
            <person name="Presecan E."/>
            <person name="Pujic P."/>
            <person name="Purnelle B."/>
            <person name="Rapoport G."/>
            <person name="Rey M."/>
            <person name="Reynolds S."/>
            <person name="Rieger M."/>
            <person name="Rivolta C."/>
            <person name="Rocha E."/>
            <person name="Roche B."/>
            <person name="Rose M."/>
            <person name="Sadaie Y."/>
            <person name="Sato T."/>
            <person name="Scanlan E."/>
            <person name="Schleich S."/>
            <person name="Schroeter R."/>
            <person name="Scoffone F."/>
            <person name="Sekiguchi J."/>
            <person name="Sekowska A."/>
            <person name="Seror S.J."/>
            <person name="Serror P."/>
            <person name="Shin B.-S."/>
            <person name="Soldo B."/>
            <person name="Sorokin A."/>
            <person name="Tacconi E."/>
            <person name="Takagi T."/>
            <person name="Takahashi H."/>
            <person name="Takemaru K."/>
            <person name="Takeuchi M."/>
            <person name="Tamakoshi A."/>
            <person name="Tanaka T."/>
            <person name="Terpstra P."/>
            <person name="Tognoni A."/>
            <person name="Tosato V."/>
            <person name="Uchiyama S."/>
            <person name="Vandenbol M."/>
            <person name="Vannier F."/>
            <person name="Vassarotti A."/>
            <person name="Viari A."/>
            <person name="Wambutt R."/>
            <person name="Wedler E."/>
            <person name="Wedler H."/>
            <person name="Weitzenegger T."/>
            <person name="Winters P."/>
            <person name="Wipat A."/>
            <person name="Yamamoto H."/>
            <person name="Yamane K."/>
            <person name="Yasumoto K."/>
            <person name="Yata K."/>
            <person name="Yoshida K."/>
            <person name="Yoshikawa H.-F."/>
            <person name="Zumstein E."/>
            <person name="Yoshikawa H."/>
            <person name="Danchin A."/>
        </authorList>
    </citation>
    <scope>NUCLEOTIDE SEQUENCE [LARGE SCALE GENOMIC DNA]</scope>
    <source>
        <strain>168</strain>
    </source>
</reference>
<reference key="2">
    <citation type="journal article" date="1998" name="J. Bacteriol.">
        <title>New small, acid-soluble proteins unique to spores of Bacillus subtilis: identification of the coding genes and regulation and function of two of these genes.</title>
        <authorList>
            <person name="Bagyan I."/>
            <person name="Setlow B."/>
            <person name="Setlow P."/>
        </authorList>
    </citation>
    <scope>PROTEIN SEQUENCE OF 2-13</scope>
    <scope>DEVELOPMENTAL STAGE</scope>
    <scope>REGULATION OF EXPRESSION</scope>
</reference>
<accession>Q7WY58</accession>
<protein>
    <recommendedName>
        <fullName>Small, acid-soluble spore protein J</fullName>
        <shortName>SASP J</shortName>
    </recommendedName>
</protein>
<sequence>MGFFNKDKGKRSEKEKNVIQGALEDAGSALKDDPLQEAVQKKKNNR</sequence>
<dbReference type="EMBL" id="AL009126">
    <property type="protein sequence ID" value="CAE01467.1"/>
    <property type="molecule type" value="Genomic_DNA"/>
</dbReference>
<dbReference type="RefSeq" id="WP_003221612.1">
    <property type="nucleotide sequence ID" value="NZ_OZ025638.1"/>
</dbReference>
<dbReference type="RefSeq" id="YP_054593.1">
    <property type="nucleotide sequence ID" value="NC_000964.3"/>
</dbReference>
<dbReference type="SMR" id="Q7WY58"/>
<dbReference type="FunCoup" id="Q7WY58">
    <property type="interactions" value="36"/>
</dbReference>
<dbReference type="STRING" id="224308.BSU33340"/>
<dbReference type="PaxDb" id="224308-BSU33340"/>
<dbReference type="EnsemblBacteria" id="CAE01467">
    <property type="protein sequence ID" value="CAE01467"/>
    <property type="gene ID" value="BSU_33340"/>
</dbReference>
<dbReference type="GeneID" id="2914269"/>
<dbReference type="KEGG" id="bsu:BSU33340"/>
<dbReference type="PATRIC" id="fig|224308.179.peg.3619"/>
<dbReference type="InParanoid" id="Q7WY58"/>
<dbReference type="OrthoDB" id="2940495at2"/>
<dbReference type="BioCyc" id="BSUB:BSU33340-MONOMER"/>
<dbReference type="Proteomes" id="UP000001570">
    <property type="component" value="Chromosome"/>
</dbReference>
<dbReference type="GO" id="GO:0030435">
    <property type="term" value="P:sporulation resulting in formation of a cellular spore"/>
    <property type="evidence" value="ECO:0007669"/>
    <property type="project" value="UniProtKB-KW"/>
</dbReference>
<dbReference type="InterPro" id="IPR014220">
    <property type="entry name" value="SASP_SspJ"/>
</dbReference>
<dbReference type="NCBIfam" id="TIGR02863">
    <property type="entry name" value="spore_sspJ"/>
    <property type="match status" value="1"/>
</dbReference>
<dbReference type="Pfam" id="PF09575">
    <property type="entry name" value="Spore_SspJ"/>
    <property type="match status" value="1"/>
</dbReference>
<evidence type="ECO:0000256" key="1">
    <source>
        <dbReference type="SAM" id="MobiDB-lite"/>
    </source>
</evidence>
<evidence type="ECO:0000269" key="2">
    <source>
    </source>
</evidence>
<comment type="subcellular location">
    <subcellularLocation>
        <location>Spore core</location>
    </subcellularLocation>
</comment>
<comment type="developmental stage">
    <text evidence="2">Expressed only in the forespore compartment of sporulating cells.</text>
</comment>
<comment type="induction">
    <text>Expression is sigma G-dependent, and to a very small extent sigma F-dependent.</text>
</comment>
<gene>
    <name type="primary">sspJ</name>
    <name type="ordered locus">BSU33340</name>
</gene>
<proteinExistence type="evidence at protein level"/>
<feature type="initiator methionine" description="Removed" evidence="2">
    <location>
        <position position="1"/>
    </location>
</feature>
<feature type="chain" id="PRO_0000072223" description="Small, acid-soluble spore protein J">
    <location>
        <begin position="2"/>
        <end position="46"/>
    </location>
</feature>
<feature type="region of interest" description="Disordered" evidence="1">
    <location>
        <begin position="24"/>
        <end position="46"/>
    </location>
</feature>
<name>SSPJ_BACSU</name>